<organism>
    <name type="scientific">Staphylococcus aureus (strain Mu50 / ATCC 700699)</name>
    <dbReference type="NCBI Taxonomy" id="158878"/>
    <lineage>
        <taxon>Bacteria</taxon>
        <taxon>Bacillati</taxon>
        <taxon>Bacillota</taxon>
        <taxon>Bacilli</taxon>
        <taxon>Bacillales</taxon>
        <taxon>Staphylococcaceae</taxon>
        <taxon>Staphylococcus</taxon>
    </lineage>
</organism>
<evidence type="ECO:0000255" key="1">
    <source>
        <dbReference type="HAMAP-Rule" id="MF_01139"/>
    </source>
</evidence>
<accession>P60476</accession>
<accession>Q99UL2</accession>
<protein>
    <recommendedName>
        <fullName evidence="1">Isoprenyl transferase</fullName>
        <ecNumber evidence="1">2.5.1.-</ecNumber>
    </recommendedName>
</protein>
<comment type="function">
    <text evidence="1">Catalyzes the condensation of isopentenyl diphosphate (IPP) with allylic pyrophosphates generating different type of terpenoids.</text>
</comment>
<comment type="cofactor">
    <cofactor evidence="1">
        <name>Mg(2+)</name>
        <dbReference type="ChEBI" id="CHEBI:18420"/>
    </cofactor>
    <text evidence="1">Binds 2 magnesium ions per subunit.</text>
</comment>
<comment type="subunit">
    <text evidence="1">Homodimer.</text>
</comment>
<comment type="similarity">
    <text evidence="1">Belongs to the UPP synthase family.</text>
</comment>
<name>ISPT_STAAM</name>
<proteinExistence type="inferred from homology"/>
<dbReference type="EC" id="2.5.1.-" evidence="1"/>
<dbReference type="EMBL" id="BA000017">
    <property type="protein sequence ID" value="BAB57422.1"/>
    <property type="molecule type" value="Genomic_DNA"/>
</dbReference>
<dbReference type="RefSeq" id="WP_000473699.1">
    <property type="nucleotide sequence ID" value="NC_002758.2"/>
</dbReference>
<dbReference type="SMR" id="P60476"/>
<dbReference type="KEGG" id="sav:SAV1260"/>
<dbReference type="HOGENOM" id="CLU_038505_1_1_9"/>
<dbReference type="PhylomeDB" id="P60476"/>
<dbReference type="Proteomes" id="UP000002481">
    <property type="component" value="Chromosome"/>
</dbReference>
<dbReference type="GO" id="GO:0005829">
    <property type="term" value="C:cytosol"/>
    <property type="evidence" value="ECO:0007669"/>
    <property type="project" value="TreeGrafter"/>
</dbReference>
<dbReference type="GO" id="GO:0008834">
    <property type="term" value="F:ditrans,polycis-undecaprenyl-diphosphate synthase [(2E,6E)-farnesyl-diphosphate specific] activity"/>
    <property type="evidence" value="ECO:0007669"/>
    <property type="project" value="TreeGrafter"/>
</dbReference>
<dbReference type="GO" id="GO:0000287">
    <property type="term" value="F:magnesium ion binding"/>
    <property type="evidence" value="ECO:0007669"/>
    <property type="project" value="UniProtKB-UniRule"/>
</dbReference>
<dbReference type="GO" id="GO:0030145">
    <property type="term" value="F:manganese ion binding"/>
    <property type="evidence" value="ECO:0007669"/>
    <property type="project" value="TreeGrafter"/>
</dbReference>
<dbReference type="GO" id="GO:0016094">
    <property type="term" value="P:polyprenol biosynthetic process"/>
    <property type="evidence" value="ECO:0007669"/>
    <property type="project" value="TreeGrafter"/>
</dbReference>
<dbReference type="CDD" id="cd00475">
    <property type="entry name" value="Cis_IPPS"/>
    <property type="match status" value="1"/>
</dbReference>
<dbReference type="FunFam" id="3.40.1180.10:FF:000001">
    <property type="entry name" value="(2E,6E)-farnesyl-diphosphate-specific ditrans,polycis-undecaprenyl-diphosphate synthase"/>
    <property type="match status" value="1"/>
</dbReference>
<dbReference type="Gene3D" id="3.40.1180.10">
    <property type="entry name" value="Decaprenyl diphosphate synthase-like"/>
    <property type="match status" value="1"/>
</dbReference>
<dbReference type="HAMAP" id="MF_01139">
    <property type="entry name" value="ISPT"/>
    <property type="match status" value="1"/>
</dbReference>
<dbReference type="InterPro" id="IPR001441">
    <property type="entry name" value="UPP_synth-like"/>
</dbReference>
<dbReference type="InterPro" id="IPR018520">
    <property type="entry name" value="UPP_synth-like_CS"/>
</dbReference>
<dbReference type="InterPro" id="IPR036424">
    <property type="entry name" value="UPP_synth-like_sf"/>
</dbReference>
<dbReference type="NCBIfam" id="NF011405">
    <property type="entry name" value="PRK14830.1"/>
    <property type="match status" value="1"/>
</dbReference>
<dbReference type="NCBIfam" id="TIGR00055">
    <property type="entry name" value="uppS"/>
    <property type="match status" value="1"/>
</dbReference>
<dbReference type="PANTHER" id="PTHR10291:SF0">
    <property type="entry name" value="DEHYDRODOLICHYL DIPHOSPHATE SYNTHASE 2"/>
    <property type="match status" value="1"/>
</dbReference>
<dbReference type="PANTHER" id="PTHR10291">
    <property type="entry name" value="DEHYDRODOLICHYL DIPHOSPHATE SYNTHASE FAMILY MEMBER"/>
    <property type="match status" value="1"/>
</dbReference>
<dbReference type="Pfam" id="PF01255">
    <property type="entry name" value="Prenyltransf"/>
    <property type="match status" value="1"/>
</dbReference>
<dbReference type="SUPFAM" id="SSF64005">
    <property type="entry name" value="Undecaprenyl diphosphate synthase"/>
    <property type="match status" value="1"/>
</dbReference>
<dbReference type="PROSITE" id="PS01066">
    <property type="entry name" value="UPP_SYNTHASE"/>
    <property type="match status" value="1"/>
</dbReference>
<sequence length="256" mass="29862">MFKKLINKKNTINNYNEELDSSNIPEHIAIIMDGNGRWAKKRKMPRIKGHYEGMQTIKKITRIASDIGVKYLTLYAFSTENWSRPESEVNYIMNLPVNFLKTFLPELIEKNVKVETIGFTDKLPKSTIEAINNAKEKTANNTGLKLIFAINYGGRAELVHSIKNMFDELHQQGLNSDIIDETYINNHLMTKDYPDPELLIRTSGEQRISNFLIWQVSYSEFIFNQKLWPDFDEDELIKCIKIYQSRQRRFGGLSEE</sequence>
<feature type="chain" id="PRO_0000123672" description="Isoprenyl transferase">
    <location>
        <begin position="1"/>
        <end position="256"/>
    </location>
</feature>
<feature type="active site" evidence="1">
    <location>
        <position position="33"/>
    </location>
</feature>
<feature type="active site" description="Proton acceptor" evidence="1">
    <location>
        <position position="81"/>
    </location>
</feature>
<feature type="binding site" evidence="1">
    <location>
        <position position="33"/>
    </location>
    <ligand>
        <name>Mg(2+)</name>
        <dbReference type="ChEBI" id="CHEBI:18420"/>
    </ligand>
</feature>
<feature type="binding site" evidence="1">
    <location>
        <begin position="34"/>
        <end position="37"/>
    </location>
    <ligand>
        <name>substrate</name>
    </ligand>
</feature>
<feature type="binding site" evidence="1">
    <location>
        <position position="38"/>
    </location>
    <ligand>
        <name>substrate</name>
    </ligand>
</feature>
<feature type="binding site" evidence="1">
    <location>
        <position position="46"/>
    </location>
    <ligand>
        <name>substrate</name>
    </ligand>
</feature>
<feature type="binding site" evidence="1">
    <location>
        <position position="50"/>
    </location>
    <ligand>
        <name>substrate</name>
    </ligand>
</feature>
<feature type="binding site" evidence="1">
    <location>
        <begin position="78"/>
        <end position="80"/>
    </location>
    <ligand>
        <name>substrate</name>
    </ligand>
</feature>
<feature type="binding site" evidence="1">
    <location>
        <position position="82"/>
    </location>
    <ligand>
        <name>substrate</name>
    </ligand>
</feature>
<feature type="binding site" evidence="1">
    <location>
        <position position="84"/>
    </location>
    <ligand>
        <name>substrate</name>
    </ligand>
</feature>
<feature type="binding site" evidence="1">
    <location>
        <position position="201"/>
    </location>
    <ligand>
        <name>substrate</name>
    </ligand>
</feature>
<feature type="binding site" evidence="1">
    <location>
        <begin position="207"/>
        <end position="209"/>
    </location>
    <ligand>
        <name>substrate</name>
    </ligand>
</feature>
<feature type="binding site" evidence="1">
    <location>
        <position position="220"/>
    </location>
    <ligand>
        <name>Mg(2+)</name>
        <dbReference type="ChEBI" id="CHEBI:18420"/>
    </ligand>
</feature>
<gene>
    <name evidence="1" type="primary">uppS</name>
    <name type="ordered locus">SAV1260</name>
</gene>
<keyword id="KW-0460">Magnesium</keyword>
<keyword id="KW-0479">Metal-binding</keyword>
<keyword id="KW-0808">Transferase</keyword>
<reference key="1">
    <citation type="journal article" date="2001" name="Lancet">
        <title>Whole genome sequencing of meticillin-resistant Staphylococcus aureus.</title>
        <authorList>
            <person name="Kuroda M."/>
            <person name="Ohta T."/>
            <person name="Uchiyama I."/>
            <person name="Baba T."/>
            <person name="Yuzawa H."/>
            <person name="Kobayashi I."/>
            <person name="Cui L."/>
            <person name="Oguchi A."/>
            <person name="Aoki K."/>
            <person name="Nagai Y."/>
            <person name="Lian J.-Q."/>
            <person name="Ito T."/>
            <person name="Kanamori M."/>
            <person name="Matsumaru H."/>
            <person name="Maruyama A."/>
            <person name="Murakami H."/>
            <person name="Hosoyama A."/>
            <person name="Mizutani-Ui Y."/>
            <person name="Takahashi N.K."/>
            <person name="Sawano T."/>
            <person name="Inoue R."/>
            <person name="Kaito C."/>
            <person name="Sekimizu K."/>
            <person name="Hirakawa H."/>
            <person name="Kuhara S."/>
            <person name="Goto S."/>
            <person name="Yabuzaki J."/>
            <person name="Kanehisa M."/>
            <person name="Yamashita A."/>
            <person name="Oshima K."/>
            <person name="Furuya K."/>
            <person name="Yoshino C."/>
            <person name="Shiba T."/>
            <person name="Hattori M."/>
            <person name="Ogasawara N."/>
            <person name="Hayashi H."/>
            <person name="Hiramatsu K."/>
        </authorList>
    </citation>
    <scope>NUCLEOTIDE SEQUENCE [LARGE SCALE GENOMIC DNA]</scope>
    <source>
        <strain>Mu50 / ATCC 700699</strain>
    </source>
</reference>